<evidence type="ECO:0000256" key="1">
    <source>
        <dbReference type="SAM" id="MobiDB-lite"/>
    </source>
</evidence>
<evidence type="ECO:0000305" key="2"/>
<evidence type="ECO:0000312" key="3">
    <source>
        <dbReference type="EMBL" id="CCP43729.1"/>
    </source>
</evidence>
<name>RL32_MYCTU</name>
<gene>
    <name type="primary">rpmF</name>
    <name evidence="3" type="ordered locus">Rv0979A</name>
</gene>
<dbReference type="EMBL" id="AL123456">
    <property type="protein sequence ID" value="CCP43729.1"/>
    <property type="molecule type" value="Genomic_DNA"/>
</dbReference>
<dbReference type="RefSeq" id="WP_003405053.1">
    <property type="nucleotide sequence ID" value="NZ_NVQJ01000018.1"/>
</dbReference>
<dbReference type="RefSeq" id="YP_177635.1">
    <property type="nucleotide sequence ID" value="NC_000962.3"/>
</dbReference>
<dbReference type="PDB" id="5V7Q">
    <property type="method" value="EM"/>
    <property type="resolution" value="3.70 A"/>
    <property type="chains" value="0=1-57"/>
</dbReference>
<dbReference type="PDB" id="7KGB">
    <property type="method" value="EM"/>
    <property type="resolution" value="2.70 A"/>
    <property type="chains" value="0=1-57"/>
</dbReference>
<dbReference type="PDB" id="7MSC">
    <property type="method" value="EM"/>
    <property type="resolution" value="2.97 A"/>
    <property type="chains" value="0=1-57"/>
</dbReference>
<dbReference type="PDB" id="7MSH">
    <property type="method" value="EM"/>
    <property type="resolution" value="3.23 A"/>
    <property type="chains" value="0=1-57"/>
</dbReference>
<dbReference type="PDB" id="7MSM">
    <property type="method" value="EM"/>
    <property type="resolution" value="2.79 A"/>
    <property type="chains" value="0=1-57"/>
</dbReference>
<dbReference type="PDB" id="7MSZ">
    <property type="method" value="EM"/>
    <property type="resolution" value="3.10 A"/>
    <property type="chains" value="0=1-57"/>
</dbReference>
<dbReference type="PDB" id="7MT2">
    <property type="method" value="EM"/>
    <property type="resolution" value="2.76 A"/>
    <property type="chains" value="0=1-57"/>
</dbReference>
<dbReference type="PDB" id="7MT3">
    <property type="method" value="EM"/>
    <property type="resolution" value="2.80 A"/>
    <property type="chains" value="0=1-57"/>
</dbReference>
<dbReference type="PDB" id="7MT7">
    <property type="method" value="EM"/>
    <property type="resolution" value="2.71 A"/>
    <property type="chains" value="0=1-57"/>
</dbReference>
<dbReference type="PDB" id="7SFR">
    <property type="method" value="EM"/>
    <property type="resolution" value="2.60 A"/>
    <property type="chains" value="0=1-57"/>
</dbReference>
<dbReference type="PDBsum" id="5V7Q"/>
<dbReference type="PDBsum" id="7KGB"/>
<dbReference type="PDBsum" id="7MSC"/>
<dbReference type="PDBsum" id="7MSH"/>
<dbReference type="PDBsum" id="7MSM"/>
<dbReference type="PDBsum" id="7MSZ"/>
<dbReference type="PDBsum" id="7MT2"/>
<dbReference type="PDBsum" id="7MT3"/>
<dbReference type="PDBsum" id="7MT7"/>
<dbReference type="PDBsum" id="7SFR"/>
<dbReference type="EMDB" id="EMD-22865"/>
<dbReference type="EMDB" id="EMD-23961"/>
<dbReference type="EMDB" id="EMD-23962"/>
<dbReference type="EMDB" id="EMD-23969"/>
<dbReference type="EMDB" id="EMD-23972"/>
<dbReference type="EMDB" id="EMD-23974"/>
<dbReference type="EMDB" id="EMD-23975"/>
<dbReference type="EMDB" id="EMD-23976"/>
<dbReference type="SMR" id="P9WH99"/>
<dbReference type="FunCoup" id="P9WH99">
    <property type="interactions" value="57"/>
</dbReference>
<dbReference type="STRING" id="83332.Rv0979A"/>
<dbReference type="PaxDb" id="83332-Rv0979A"/>
<dbReference type="DNASU" id="3205057"/>
<dbReference type="GeneID" id="3205057"/>
<dbReference type="GeneID" id="45424948"/>
<dbReference type="KEGG" id="mtu:Rv0979A"/>
<dbReference type="KEGG" id="mtv:RVBD_0979A"/>
<dbReference type="TubercuList" id="Rv0979A"/>
<dbReference type="eggNOG" id="ENOG5033AVR">
    <property type="taxonomic scope" value="Bacteria"/>
</dbReference>
<dbReference type="InParanoid" id="P9WH99"/>
<dbReference type="OrthoDB" id="9807363at2"/>
<dbReference type="PRO" id="PR:P9WH99"/>
<dbReference type="Proteomes" id="UP000001584">
    <property type="component" value="Chromosome"/>
</dbReference>
<dbReference type="GO" id="GO:0015934">
    <property type="term" value="C:large ribosomal subunit"/>
    <property type="evidence" value="ECO:0007669"/>
    <property type="project" value="InterPro"/>
</dbReference>
<dbReference type="GO" id="GO:0003735">
    <property type="term" value="F:structural constituent of ribosome"/>
    <property type="evidence" value="ECO:0007669"/>
    <property type="project" value="InterPro"/>
</dbReference>
<dbReference type="GO" id="GO:0006412">
    <property type="term" value="P:translation"/>
    <property type="evidence" value="ECO:0007669"/>
    <property type="project" value="UniProtKB-UniRule"/>
</dbReference>
<dbReference type="HAMAP" id="MF_00340">
    <property type="entry name" value="Ribosomal_bL32"/>
    <property type="match status" value="1"/>
</dbReference>
<dbReference type="InterPro" id="IPR002677">
    <property type="entry name" value="Ribosomal_bL32"/>
</dbReference>
<dbReference type="InterPro" id="IPR011332">
    <property type="entry name" value="Ribosomal_zn-bd"/>
</dbReference>
<dbReference type="NCBIfam" id="TIGR01031">
    <property type="entry name" value="rpmF_bact"/>
    <property type="match status" value="1"/>
</dbReference>
<dbReference type="Pfam" id="PF01783">
    <property type="entry name" value="Ribosomal_L32p"/>
    <property type="match status" value="1"/>
</dbReference>
<dbReference type="SUPFAM" id="SSF57829">
    <property type="entry name" value="Zn-binding ribosomal proteins"/>
    <property type="match status" value="1"/>
</dbReference>
<keyword id="KW-0002">3D-structure</keyword>
<keyword id="KW-1185">Reference proteome</keyword>
<keyword id="KW-0687">Ribonucleoprotein</keyword>
<keyword id="KW-0689">Ribosomal protein</keyword>
<comment type="similarity">
    <text evidence="2">Belongs to the bacterial ribosomal protein bL32 family.</text>
</comment>
<proteinExistence type="evidence at protein level"/>
<feature type="chain" id="PRO_0000172373" description="Large ribosomal subunit protein bL32">
    <location>
        <begin position="1"/>
        <end position="57"/>
    </location>
</feature>
<feature type="region of interest" description="Disordered" evidence="1">
    <location>
        <begin position="1"/>
        <end position="22"/>
    </location>
</feature>
<feature type="compositionally biased region" description="Basic residues" evidence="1">
    <location>
        <begin position="1"/>
        <end position="19"/>
    </location>
</feature>
<reference key="1">
    <citation type="journal article" date="1998" name="Nature">
        <title>Deciphering the biology of Mycobacterium tuberculosis from the complete genome sequence.</title>
        <authorList>
            <person name="Cole S.T."/>
            <person name="Brosch R."/>
            <person name="Parkhill J."/>
            <person name="Garnier T."/>
            <person name="Churcher C.M."/>
            <person name="Harris D.E."/>
            <person name="Gordon S.V."/>
            <person name="Eiglmeier K."/>
            <person name="Gas S."/>
            <person name="Barry C.E. III"/>
            <person name="Tekaia F."/>
            <person name="Badcock K."/>
            <person name="Basham D."/>
            <person name="Brown D."/>
            <person name="Chillingworth T."/>
            <person name="Connor R."/>
            <person name="Davies R.M."/>
            <person name="Devlin K."/>
            <person name="Feltwell T."/>
            <person name="Gentles S."/>
            <person name="Hamlin N."/>
            <person name="Holroyd S."/>
            <person name="Hornsby T."/>
            <person name="Jagels K."/>
            <person name="Krogh A."/>
            <person name="McLean J."/>
            <person name="Moule S."/>
            <person name="Murphy L.D."/>
            <person name="Oliver S."/>
            <person name="Osborne J."/>
            <person name="Quail M.A."/>
            <person name="Rajandream M.A."/>
            <person name="Rogers J."/>
            <person name="Rutter S."/>
            <person name="Seeger K."/>
            <person name="Skelton S."/>
            <person name="Squares S."/>
            <person name="Squares R."/>
            <person name="Sulston J.E."/>
            <person name="Taylor K."/>
            <person name="Whitehead S."/>
            <person name="Barrell B.G."/>
        </authorList>
    </citation>
    <scope>NUCLEOTIDE SEQUENCE [LARGE SCALE GENOMIC DNA]</scope>
    <source>
        <strain>ATCC 25618 / H37Rv</strain>
    </source>
</reference>
<reference key="2">
    <citation type="journal article" date="2002" name="Microbiology">
        <title>Re-annotation of the genome sequence of Mycobacterium tuberculosis H37Rv.</title>
        <authorList>
            <person name="Camus J.-C."/>
            <person name="Pryor M.J."/>
            <person name="Medigue C."/>
            <person name="Cole S.T."/>
        </authorList>
    </citation>
    <scope>IDENTIFICATION</scope>
    <source>
        <strain>ATCC 25618 / H37Rv</strain>
    </source>
</reference>
<reference key="3">
    <citation type="journal article" date="2011" name="Mol. Cell. Proteomics">
        <title>Proteogenomic analysis of Mycobacterium tuberculosis by high resolution mass spectrometry.</title>
        <authorList>
            <person name="Kelkar D.S."/>
            <person name="Kumar D."/>
            <person name="Kumar P."/>
            <person name="Balakrishnan L."/>
            <person name="Muthusamy B."/>
            <person name="Yadav A.K."/>
            <person name="Shrivastava P."/>
            <person name="Marimuthu A."/>
            <person name="Anand S."/>
            <person name="Sundaram H."/>
            <person name="Kingsbury R."/>
            <person name="Harsha H.C."/>
            <person name="Nair B."/>
            <person name="Prasad T.S."/>
            <person name="Chauhan D.S."/>
            <person name="Katoch K."/>
            <person name="Katoch V.M."/>
            <person name="Kumar P."/>
            <person name="Chaerkady R."/>
            <person name="Ramachandran S."/>
            <person name="Dash D."/>
            <person name="Pandey A."/>
        </authorList>
    </citation>
    <scope>IDENTIFICATION BY MASS SPECTROMETRY [LARGE SCALE ANALYSIS]</scope>
    <source>
        <strain>ATCC 25618 / H37Rv</strain>
    </source>
</reference>
<sequence>MAVPKRRKSRSNTRSRRSQWKAAKTELVGVTVAGHAHKVPRRLLKAARLGLIDFDKR</sequence>
<organism>
    <name type="scientific">Mycobacterium tuberculosis (strain ATCC 25618 / H37Rv)</name>
    <dbReference type="NCBI Taxonomy" id="83332"/>
    <lineage>
        <taxon>Bacteria</taxon>
        <taxon>Bacillati</taxon>
        <taxon>Actinomycetota</taxon>
        <taxon>Actinomycetes</taxon>
        <taxon>Mycobacteriales</taxon>
        <taxon>Mycobacteriaceae</taxon>
        <taxon>Mycobacterium</taxon>
        <taxon>Mycobacterium tuberculosis complex</taxon>
    </lineage>
</organism>
<protein>
    <recommendedName>
        <fullName evidence="2">Large ribosomal subunit protein bL32</fullName>
    </recommendedName>
    <alternativeName>
        <fullName>50S ribosomal protein L32</fullName>
    </alternativeName>
</protein>
<accession>P9WH99</accession>
<accession>L0T6Z3</accession>
<accession>P0A5V8</accession>
<accession>P58287</accession>